<dbReference type="EMBL" id="BX936398">
    <property type="protein sequence ID" value="CAH22245.1"/>
    <property type="molecule type" value="Genomic_DNA"/>
</dbReference>
<dbReference type="RefSeq" id="WP_002212127.1">
    <property type="nucleotide sequence ID" value="NZ_CP009712.1"/>
</dbReference>
<dbReference type="SMR" id="Q667I5"/>
<dbReference type="KEGG" id="ypo:BZ17_3614"/>
<dbReference type="KEGG" id="yps:YPTB3007"/>
<dbReference type="PATRIC" id="fig|273123.14.peg.3794"/>
<dbReference type="Proteomes" id="UP000001011">
    <property type="component" value="Chromosome"/>
</dbReference>
<dbReference type="HAMAP" id="MF_01519">
    <property type="entry name" value="UPF0325"/>
    <property type="match status" value="1"/>
</dbReference>
<dbReference type="InterPro" id="IPR020911">
    <property type="entry name" value="UPF0325"/>
</dbReference>
<dbReference type="NCBIfam" id="NF010213">
    <property type="entry name" value="PRK13677.1"/>
    <property type="match status" value="1"/>
</dbReference>
<dbReference type="Pfam" id="PF11944">
    <property type="entry name" value="DUF3461"/>
    <property type="match status" value="1"/>
</dbReference>
<gene>
    <name type="ordered locus">YPTB3007</name>
</gene>
<organism>
    <name type="scientific">Yersinia pseudotuberculosis serotype I (strain IP32953)</name>
    <dbReference type="NCBI Taxonomy" id="273123"/>
    <lineage>
        <taxon>Bacteria</taxon>
        <taxon>Pseudomonadati</taxon>
        <taxon>Pseudomonadota</taxon>
        <taxon>Gammaproteobacteria</taxon>
        <taxon>Enterobacterales</taxon>
        <taxon>Yersiniaceae</taxon>
        <taxon>Yersinia</taxon>
    </lineage>
</organism>
<sequence>MYDNLKSLGITQPEDVDRYSLRQEANNDILKIYFRKDKGEFFAKSVKFKYPRQRKTVVSDNASHGYKEINEINPNLRYVIDELDQLCKRDQIEVDLKRKILDDLRHLESVVTNKIAEIEADLEKLTNGR</sequence>
<proteinExistence type="inferred from homology"/>
<accession>Q667I5</accession>
<comment type="similarity">
    <text evidence="1">Belongs to the UPF0325 family.</text>
</comment>
<protein>
    <recommendedName>
        <fullName evidence="1">UPF0325 protein YPTB3007</fullName>
    </recommendedName>
</protein>
<name>Y3007_YERPS</name>
<evidence type="ECO:0000255" key="1">
    <source>
        <dbReference type="HAMAP-Rule" id="MF_01519"/>
    </source>
</evidence>
<reference key="1">
    <citation type="journal article" date="2004" name="Proc. Natl. Acad. Sci. U.S.A.">
        <title>Insights into the evolution of Yersinia pestis through whole-genome comparison with Yersinia pseudotuberculosis.</title>
        <authorList>
            <person name="Chain P.S.G."/>
            <person name="Carniel E."/>
            <person name="Larimer F.W."/>
            <person name="Lamerdin J."/>
            <person name="Stoutland P.O."/>
            <person name="Regala W.M."/>
            <person name="Georgescu A.M."/>
            <person name="Vergez L.M."/>
            <person name="Land M.L."/>
            <person name="Motin V.L."/>
            <person name="Brubaker R.R."/>
            <person name="Fowler J."/>
            <person name="Hinnebusch J."/>
            <person name="Marceau M."/>
            <person name="Medigue C."/>
            <person name="Simonet M."/>
            <person name="Chenal-Francisque V."/>
            <person name="Souza B."/>
            <person name="Dacheux D."/>
            <person name="Elliott J.M."/>
            <person name="Derbise A."/>
            <person name="Hauser L.J."/>
            <person name="Garcia E."/>
        </authorList>
    </citation>
    <scope>NUCLEOTIDE SEQUENCE [LARGE SCALE GENOMIC DNA]</scope>
    <source>
        <strain>IP32953</strain>
    </source>
</reference>
<feature type="chain" id="PRO_0000211852" description="UPF0325 protein YPTB3007">
    <location>
        <begin position="1"/>
        <end position="129"/>
    </location>
</feature>